<dbReference type="EC" id="5.3.1.6" evidence="1"/>
<dbReference type="EMBL" id="BX908798">
    <property type="protein sequence ID" value="CAF23899.1"/>
    <property type="molecule type" value="Genomic_DNA"/>
</dbReference>
<dbReference type="RefSeq" id="WP_011175725.1">
    <property type="nucleotide sequence ID" value="NC_005861.2"/>
</dbReference>
<dbReference type="SMR" id="Q6MC00"/>
<dbReference type="STRING" id="264201.pc1175"/>
<dbReference type="KEGG" id="pcu:PC_RS05660"/>
<dbReference type="eggNOG" id="COG0120">
    <property type="taxonomic scope" value="Bacteria"/>
</dbReference>
<dbReference type="HOGENOM" id="CLU_056590_1_0_0"/>
<dbReference type="OrthoDB" id="5870696at2"/>
<dbReference type="UniPathway" id="UPA00115">
    <property type="reaction ID" value="UER00412"/>
</dbReference>
<dbReference type="Proteomes" id="UP000000529">
    <property type="component" value="Chromosome"/>
</dbReference>
<dbReference type="GO" id="GO:0005829">
    <property type="term" value="C:cytosol"/>
    <property type="evidence" value="ECO:0007669"/>
    <property type="project" value="TreeGrafter"/>
</dbReference>
<dbReference type="GO" id="GO:0004751">
    <property type="term" value="F:ribose-5-phosphate isomerase activity"/>
    <property type="evidence" value="ECO:0007669"/>
    <property type="project" value="UniProtKB-UniRule"/>
</dbReference>
<dbReference type="GO" id="GO:0006014">
    <property type="term" value="P:D-ribose metabolic process"/>
    <property type="evidence" value="ECO:0007669"/>
    <property type="project" value="TreeGrafter"/>
</dbReference>
<dbReference type="GO" id="GO:0009052">
    <property type="term" value="P:pentose-phosphate shunt, non-oxidative branch"/>
    <property type="evidence" value="ECO:0007669"/>
    <property type="project" value="UniProtKB-UniRule"/>
</dbReference>
<dbReference type="CDD" id="cd01398">
    <property type="entry name" value="RPI_A"/>
    <property type="match status" value="1"/>
</dbReference>
<dbReference type="FunFam" id="3.40.50.1360:FF:000001">
    <property type="entry name" value="Ribose-5-phosphate isomerase A"/>
    <property type="match status" value="1"/>
</dbReference>
<dbReference type="Gene3D" id="3.30.70.260">
    <property type="match status" value="1"/>
</dbReference>
<dbReference type="Gene3D" id="3.40.50.1360">
    <property type="match status" value="1"/>
</dbReference>
<dbReference type="HAMAP" id="MF_00170">
    <property type="entry name" value="Rib_5P_isom_A"/>
    <property type="match status" value="1"/>
</dbReference>
<dbReference type="InterPro" id="IPR037171">
    <property type="entry name" value="NagB/RpiA_transferase-like"/>
</dbReference>
<dbReference type="InterPro" id="IPR020672">
    <property type="entry name" value="Ribose5P_isomerase_typA_subgr"/>
</dbReference>
<dbReference type="InterPro" id="IPR004788">
    <property type="entry name" value="Ribose5P_isomerase_type_A"/>
</dbReference>
<dbReference type="NCBIfam" id="NF001924">
    <property type="entry name" value="PRK00702.1"/>
    <property type="match status" value="1"/>
</dbReference>
<dbReference type="NCBIfam" id="TIGR00021">
    <property type="entry name" value="rpiA"/>
    <property type="match status" value="1"/>
</dbReference>
<dbReference type="PANTHER" id="PTHR11934">
    <property type="entry name" value="RIBOSE-5-PHOSPHATE ISOMERASE"/>
    <property type="match status" value="1"/>
</dbReference>
<dbReference type="PANTHER" id="PTHR11934:SF0">
    <property type="entry name" value="RIBOSE-5-PHOSPHATE ISOMERASE"/>
    <property type="match status" value="1"/>
</dbReference>
<dbReference type="Pfam" id="PF06026">
    <property type="entry name" value="Rib_5-P_isom_A"/>
    <property type="match status" value="1"/>
</dbReference>
<dbReference type="SUPFAM" id="SSF75445">
    <property type="entry name" value="D-ribose-5-phosphate isomerase (RpiA), lid domain"/>
    <property type="match status" value="1"/>
</dbReference>
<dbReference type="SUPFAM" id="SSF100950">
    <property type="entry name" value="NagB/RpiA/CoA transferase-like"/>
    <property type="match status" value="1"/>
</dbReference>
<feature type="chain" id="PRO_0000158443" description="Ribose-5-phosphate isomerase A">
    <location>
        <begin position="1"/>
        <end position="232"/>
    </location>
</feature>
<feature type="active site" description="Proton acceptor" evidence="1">
    <location>
        <position position="111"/>
    </location>
</feature>
<feature type="binding site" evidence="1">
    <location>
        <begin position="34"/>
        <end position="37"/>
    </location>
    <ligand>
        <name>substrate</name>
    </ligand>
</feature>
<feature type="binding site" evidence="1">
    <location>
        <begin position="89"/>
        <end position="92"/>
    </location>
    <ligand>
        <name>substrate</name>
    </ligand>
</feature>
<feature type="binding site" evidence="1">
    <location>
        <begin position="102"/>
        <end position="105"/>
    </location>
    <ligand>
        <name>substrate</name>
    </ligand>
</feature>
<feature type="binding site" evidence="1">
    <location>
        <position position="129"/>
    </location>
    <ligand>
        <name>substrate</name>
    </ligand>
</feature>
<comment type="function">
    <text evidence="1">Catalyzes the reversible conversion of ribose-5-phosphate to ribulose 5-phosphate.</text>
</comment>
<comment type="catalytic activity">
    <reaction evidence="1">
        <text>aldehydo-D-ribose 5-phosphate = D-ribulose 5-phosphate</text>
        <dbReference type="Rhea" id="RHEA:14657"/>
        <dbReference type="ChEBI" id="CHEBI:58121"/>
        <dbReference type="ChEBI" id="CHEBI:58273"/>
        <dbReference type="EC" id="5.3.1.6"/>
    </reaction>
</comment>
<comment type="pathway">
    <text evidence="1">Carbohydrate degradation; pentose phosphate pathway; D-ribose 5-phosphate from D-ribulose 5-phosphate (non-oxidative stage): step 1/1.</text>
</comment>
<comment type="subunit">
    <text evidence="1">Homodimer.</text>
</comment>
<comment type="similarity">
    <text evidence="1">Belongs to the ribose 5-phosphate isomerase family.</text>
</comment>
<proteinExistence type="inferred from homology"/>
<gene>
    <name evidence="1" type="primary">rpiA</name>
    <name type="ordered locus">pc1175</name>
</gene>
<keyword id="KW-0413">Isomerase</keyword>
<keyword id="KW-1185">Reference proteome</keyword>
<reference key="1">
    <citation type="journal article" date="2004" name="Science">
        <title>Illuminating the evolutionary history of chlamydiae.</title>
        <authorList>
            <person name="Horn M."/>
            <person name="Collingro A."/>
            <person name="Schmitz-Esser S."/>
            <person name="Beier C.L."/>
            <person name="Purkhold U."/>
            <person name="Fartmann B."/>
            <person name="Brandt P."/>
            <person name="Nyakatura G.J."/>
            <person name="Droege M."/>
            <person name="Frishman D."/>
            <person name="Rattei T."/>
            <person name="Mewes H.-W."/>
            <person name="Wagner M."/>
        </authorList>
    </citation>
    <scope>NUCLEOTIDE SEQUENCE [LARGE SCALE GENOMIC DNA]</scope>
    <source>
        <strain>UWE25</strain>
    </source>
</reference>
<name>RPIA_PARUW</name>
<evidence type="ECO:0000255" key="1">
    <source>
        <dbReference type="HAMAP-Rule" id="MF_00170"/>
    </source>
</evidence>
<accession>Q6MC00</accession>
<organism>
    <name type="scientific">Protochlamydia amoebophila (strain UWE25)</name>
    <dbReference type="NCBI Taxonomy" id="264201"/>
    <lineage>
        <taxon>Bacteria</taxon>
        <taxon>Pseudomonadati</taxon>
        <taxon>Chlamydiota</taxon>
        <taxon>Chlamydiia</taxon>
        <taxon>Parachlamydiales</taxon>
        <taxon>Parachlamydiaceae</taxon>
        <taxon>Candidatus Protochlamydia</taxon>
    </lineage>
</organism>
<sequence length="232" mass="25396">MTQTNDSPSIKAKKAAALKAVEFVQDQMIIGLGTGSTIAYFIEALGKRCQAGLKITAIASSERSMRQARLVGIPIVDSDTILELDLTIDGADEIDPLKQMIKGGGGALLREKLIASASKEMIVVIDETKLVNKLGKFPVATEISIFTFRHIVKKLKDHGYCGSLRVNQDQSLYRTDNGNYIFDICFPEPIDNPIFEHNRLKSFAGVLETGLFFNLAGRVIIGYQNGMTKIVA</sequence>
<protein>
    <recommendedName>
        <fullName evidence="1">Ribose-5-phosphate isomerase A</fullName>
        <ecNumber evidence="1">5.3.1.6</ecNumber>
    </recommendedName>
    <alternativeName>
        <fullName evidence="1">Phosphoriboisomerase A</fullName>
        <shortName evidence="1">PRI</shortName>
    </alternativeName>
</protein>